<sequence>MSSTQEKPEELDRIQKRVNKILEARLESDKDTLDALSGLSTFFTENTLQNRRNLRSQIEHRSVGINENFLKAFRQVKLSLDAVCEDLDTMATSVETMKSDLETSKALTKDLIKQTNTMQRERDRLEVHKQIAQAFLARFQLSGAEHQLLYGAAKDAPIVADFFRVLDRVQSIHADCRLLMQCGYQTAAIDIMEEMTLHQEGALERLYRWTQNHCRSLENNEIGPLIVEAMSRLQDRPVLFKYVIDEYAIARRAVLVRQFIEALTEGGPGGNPKPIELHAHDPKRYIGDMFAWLHQSIPTEKENLSLLFKKCDKQDISDQLQNALGYIADGVCHPLKVRVETILQAEKDTIVLFTISNLLRFYQQIMRQVVQGGSLEECLVELQKSSEQIYLGALAAQVRSVLQRPSGGSGLALEPPQRDLVPPPSVARLLNMLKEILSVATMVDGRQADITKIVSCVIDPLLQSVQESAAHLPTVDMGVYLLNCLHHMQSSLAVYEYMDERVERLQAQSDAQLDTLTSEQASSLVANLNLGPIYAILQSNQSKIETNLLKIFMSKMDAFLELPDVLLLPQVQLIMSSSHRAAVQKRSFNVIVAIYKQIYERVHDPANGFEQPEQLLHRTPEQVAHILTST</sequence>
<keyword id="KW-0025">Alternative splicing</keyword>
<keyword id="KW-0333">Golgi apparatus</keyword>
<keyword id="KW-0472">Membrane</keyword>
<keyword id="KW-0653">Protein transport</keyword>
<keyword id="KW-1185">Reference proteome</keyword>
<keyword id="KW-0813">Transport</keyword>
<protein>
    <recommendedName>
        <fullName>Conserved oligomeric Golgi complex subunit 6</fullName>
        <shortName>COG complex subunit 6</shortName>
    </recommendedName>
    <alternativeName>
        <fullName evidence="3">Component of oligomeric Golgi complex 6</fullName>
    </alternativeName>
</protein>
<dbReference type="EMBL" id="AE013599">
    <property type="protein sequence ID" value="AAF58956.1"/>
    <property type="molecule type" value="Genomic_DNA"/>
</dbReference>
<dbReference type="EMBL" id="AE013599">
    <property type="protein sequence ID" value="AAM68826.1"/>
    <property type="molecule type" value="Genomic_DNA"/>
</dbReference>
<dbReference type="EMBL" id="AY061082">
    <property type="protein sequence ID" value="AAL28630.1"/>
    <property type="molecule type" value="mRNA"/>
</dbReference>
<dbReference type="RefSeq" id="NP_610476.1">
    <molecule id="Q9V564-2"/>
    <property type="nucleotide sequence ID" value="NM_136632.5"/>
</dbReference>
<dbReference type="RefSeq" id="NP_724783.1">
    <molecule id="Q9V564-1"/>
    <property type="nucleotide sequence ID" value="NM_165673.3"/>
</dbReference>
<dbReference type="SMR" id="Q9V564"/>
<dbReference type="BioGRID" id="61789">
    <property type="interactions" value="30"/>
</dbReference>
<dbReference type="ComplexPortal" id="CPX-2794">
    <property type="entry name" value="COG tethering complex"/>
</dbReference>
<dbReference type="DIP" id="DIP-17959N"/>
<dbReference type="FunCoup" id="Q9V564">
    <property type="interactions" value="1119"/>
</dbReference>
<dbReference type="IntAct" id="Q9V564">
    <property type="interactions" value="1"/>
</dbReference>
<dbReference type="STRING" id="7227.FBpp0087676"/>
<dbReference type="PaxDb" id="7227-FBpp0087676"/>
<dbReference type="DNASU" id="35953"/>
<dbReference type="EnsemblMetazoa" id="FBtr0088595">
    <molecule id="Q9V564-1"/>
    <property type="protein sequence ID" value="FBpp0087676"/>
    <property type="gene ID" value="FBgn0033401"/>
</dbReference>
<dbReference type="EnsemblMetazoa" id="FBtr0088596">
    <molecule id="Q9V564-2"/>
    <property type="protein sequence ID" value="FBpp0087677"/>
    <property type="gene ID" value="FBgn0033401"/>
</dbReference>
<dbReference type="GeneID" id="35953"/>
<dbReference type="KEGG" id="dme:Dmel_CG1968"/>
<dbReference type="UCSC" id="CG1968-RA">
    <molecule id="Q9V564-1"/>
    <property type="organism name" value="d. melanogaster"/>
</dbReference>
<dbReference type="AGR" id="FB:FBgn0033401"/>
<dbReference type="CTD" id="57511"/>
<dbReference type="FlyBase" id="FBgn0033401">
    <property type="gene designation" value="Cog6"/>
</dbReference>
<dbReference type="VEuPathDB" id="VectorBase:FBgn0033401"/>
<dbReference type="eggNOG" id="KOG3758">
    <property type="taxonomic scope" value="Eukaryota"/>
</dbReference>
<dbReference type="GeneTree" id="ENSGT00390000013518"/>
<dbReference type="HOGENOM" id="CLU_011361_3_0_1"/>
<dbReference type="InParanoid" id="Q9V564"/>
<dbReference type="OMA" id="HSCLDFF"/>
<dbReference type="OrthoDB" id="272987at2759"/>
<dbReference type="PhylomeDB" id="Q9V564"/>
<dbReference type="Reactome" id="R-DME-6807878">
    <property type="pathway name" value="COPI-mediated anterograde transport"/>
</dbReference>
<dbReference type="Reactome" id="R-DME-6811438">
    <property type="pathway name" value="Intra-Golgi traffic"/>
</dbReference>
<dbReference type="Reactome" id="R-DME-6811440">
    <property type="pathway name" value="Retrograde transport at the Trans-Golgi-Network"/>
</dbReference>
<dbReference type="BioGRID-ORCS" id="35953">
    <property type="hits" value="0 hits in 1 CRISPR screen"/>
</dbReference>
<dbReference type="GenomeRNAi" id="35953"/>
<dbReference type="PRO" id="PR:Q9V564"/>
<dbReference type="Proteomes" id="UP000000803">
    <property type="component" value="Chromosome 2R"/>
</dbReference>
<dbReference type="Bgee" id="FBgn0033401">
    <property type="expression patterns" value="Expressed in enteroblast (Drosophila) in digestive tract and 98 other cell types or tissues"/>
</dbReference>
<dbReference type="GO" id="GO:0000139">
    <property type="term" value="C:Golgi membrane"/>
    <property type="evidence" value="ECO:0007669"/>
    <property type="project" value="UniProtKB-SubCell"/>
</dbReference>
<dbReference type="GO" id="GO:0017119">
    <property type="term" value="C:Golgi transport complex"/>
    <property type="evidence" value="ECO:0000314"/>
    <property type="project" value="FlyBase"/>
</dbReference>
<dbReference type="GO" id="GO:0006891">
    <property type="term" value="P:intra-Golgi vesicle-mediated transport"/>
    <property type="evidence" value="ECO:0000250"/>
    <property type="project" value="FlyBase"/>
</dbReference>
<dbReference type="GO" id="GO:0015031">
    <property type="term" value="P:protein transport"/>
    <property type="evidence" value="ECO:0007669"/>
    <property type="project" value="UniProtKB-KW"/>
</dbReference>
<dbReference type="InterPro" id="IPR010490">
    <property type="entry name" value="COG6"/>
</dbReference>
<dbReference type="InterPro" id="IPR048369">
    <property type="entry name" value="COG6_C"/>
</dbReference>
<dbReference type="InterPro" id="IPR048368">
    <property type="entry name" value="COG6_N"/>
</dbReference>
<dbReference type="PANTHER" id="PTHR21506">
    <property type="entry name" value="COMPONENT OF OLIGOMERIC GOLGI COMPLEX 6"/>
    <property type="match status" value="1"/>
</dbReference>
<dbReference type="PANTHER" id="PTHR21506:SF0">
    <property type="entry name" value="CONSERVED OLIGOMERIC GOLGI COMPLEX SUBUNIT 6"/>
    <property type="match status" value="1"/>
</dbReference>
<dbReference type="Pfam" id="PF20653">
    <property type="entry name" value="COG6_C"/>
    <property type="match status" value="1"/>
</dbReference>
<dbReference type="Pfam" id="PF06419">
    <property type="entry name" value="COG6_N"/>
    <property type="match status" value="1"/>
</dbReference>
<dbReference type="SMART" id="SM01087">
    <property type="entry name" value="COG6"/>
    <property type="match status" value="1"/>
</dbReference>
<evidence type="ECO:0000250" key="1"/>
<evidence type="ECO:0000305" key="2"/>
<evidence type="ECO:0000312" key="3">
    <source>
        <dbReference type="FlyBase" id="FBgn0033401"/>
    </source>
</evidence>
<organism>
    <name type="scientific">Drosophila melanogaster</name>
    <name type="common">Fruit fly</name>
    <dbReference type="NCBI Taxonomy" id="7227"/>
    <lineage>
        <taxon>Eukaryota</taxon>
        <taxon>Metazoa</taxon>
        <taxon>Ecdysozoa</taxon>
        <taxon>Arthropoda</taxon>
        <taxon>Hexapoda</taxon>
        <taxon>Insecta</taxon>
        <taxon>Pterygota</taxon>
        <taxon>Neoptera</taxon>
        <taxon>Endopterygota</taxon>
        <taxon>Diptera</taxon>
        <taxon>Brachycera</taxon>
        <taxon>Muscomorpha</taxon>
        <taxon>Ephydroidea</taxon>
        <taxon>Drosophilidae</taxon>
        <taxon>Drosophila</taxon>
        <taxon>Sophophora</taxon>
    </lineage>
</organism>
<accession>Q9V564</accession>
<accession>Q95RW7</accession>
<gene>
    <name evidence="3" type="primary">Cog6</name>
    <name evidence="3" type="ORF">CG1968</name>
</gene>
<proteinExistence type="evidence at transcript level"/>
<reference key="1">
    <citation type="journal article" date="2000" name="Science">
        <title>The genome sequence of Drosophila melanogaster.</title>
        <authorList>
            <person name="Adams M.D."/>
            <person name="Celniker S.E."/>
            <person name="Holt R.A."/>
            <person name="Evans C.A."/>
            <person name="Gocayne J.D."/>
            <person name="Amanatides P.G."/>
            <person name="Scherer S.E."/>
            <person name="Li P.W."/>
            <person name="Hoskins R.A."/>
            <person name="Galle R.F."/>
            <person name="George R.A."/>
            <person name="Lewis S.E."/>
            <person name="Richards S."/>
            <person name="Ashburner M."/>
            <person name="Henderson S.N."/>
            <person name="Sutton G.G."/>
            <person name="Wortman J.R."/>
            <person name="Yandell M.D."/>
            <person name="Zhang Q."/>
            <person name="Chen L.X."/>
            <person name="Brandon R.C."/>
            <person name="Rogers Y.-H.C."/>
            <person name="Blazej R.G."/>
            <person name="Champe M."/>
            <person name="Pfeiffer B.D."/>
            <person name="Wan K.H."/>
            <person name="Doyle C."/>
            <person name="Baxter E.G."/>
            <person name="Helt G."/>
            <person name="Nelson C.R."/>
            <person name="Miklos G.L.G."/>
            <person name="Abril J.F."/>
            <person name="Agbayani A."/>
            <person name="An H.-J."/>
            <person name="Andrews-Pfannkoch C."/>
            <person name="Baldwin D."/>
            <person name="Ballew R.M."/>
            <person name="Basu A."/>
            <person name="Baxendale J."/>
            <person name="Bayraktaroglu L."/>
            <person name="Beasley E.M."/>
            <person name="Beeson K.Y."/>
            <person name="Benos P.V."/>
            <person name="Berman B.P."/>
            <person name="Bhandari D."/>
            <person name="Bolshakov S."/>
            <person name="Borkova D."/>
            <person name="Botchan M.R."/>
            <person name="Bouck J."/>
            <person name="Brokstein P."/>
            <person name="Brottier P."/>
            <person name="Burtis K.C."/>
            <person name="Busam D.A."/>
            <person name="Butler H."/>
            <person name="Cadieu E."/>
            <person name="Center A."/>
            <person name="Chandra I."/>
            <person name="Cherry J.M."/>
            <person name="Cawley S."/>
            <person name="Dahlke C."/>
            <person name="Davenport L.B."/>
            <person name="Davies P."/>
            <person name="de Pablos B."/>
            <person name="Delcher A."/>
            <person name="Deng Z."/>
            <person name="Mays A.D."/>
            <person name="Dew I."/>
            <person name="Dietz S.M."/>
            <person name="Dodson K."/>
            <person name="Doup L.E."/>
            <person name="Downes M."/>
            <person name="Dugan-Rocha S."/>
            <person name="Dunkov B.C."/>
            <person name="Dunn P."/>
            <person name="Durbin K.J."/>
            <person name="Evangelista C.C."/>
            <person name="Ferraz C."/>
            <person name="Ferriera S."/>
            <person name="Fleischmann W."/>
            <person name="Fosler C."/>
            <person name="Gabrielian A.E."/>
            <person name="Garg N.S."/>
            <person name="Gelbart W.M."/>
            <person name="Glasser K."/>
            <person name="Glodek A."/>
            <person name="Gong F."/>
            <person name="Gorrell J.H."/>
            <person name="Gu Z."/>
            <person name="Guan P."/>
            <person name="Harris M."/>
            <person name="Harris N.L."/>
            <person name="Harvey D.A."/>
            <person name="Heiman T.J."/>
            <person name="Hernandez J.R."/>
            <person name="Houck J."/>
            <person name="Hostin D."/>
            <person name="Houston K.A."/>
            <person name="Howland T.J."/>
            <person name="Wei M.-H."/>
            <person name="Ibegwam C."/>
            <person name="Jalali M."/>
            <person name="Kalush F."/>
            <person name="Karpen G.H."/>
            <person name="Ke Z."/>
            <person name="Kennison J.A."/>
            <person name="Ketchum K.A."/>
            <person name="Kimmel B.E."/>
            <person name="Kodira C.D."/>
            <person name="Kraft C.L."/>
            <person name="Kravitz S."/>
            <person name="Kulp D."/>
            <person name="Lai Z."/>
            <person name="Lasko P."/>
            <person name="Lei Y."/>
            <person name="Levitsky A.A."/>
            <person name="Li J.H."/>
            <person name="Li Z."/>
            <person name="Liang Y."/>
            <person name="Lin X."/>
            <person name="Liu X."/>
            <person name="Mattei B."/>
            <person name="McIntosh T.C."/>
            <person name="McLeod M.P."/>
            <person name="McPherson D."/>
            <person name="Merkulov G."/>
            <person name="Milshina N.V."/>
            <person name="Mobarry C."/>
            <person name="Morris J."/>
            <person name="Moshrefi A."/>
            <person name="Mount S.M."/>
            <person name="Moy M."/>
            <person name="Murphy B."/>
            <person name="Murphy L."/>
            <person name="Muzny D.M."/>
            <person name="Nelson D.L."/>
            <person name="Nelson D.R."/>
            <person name="Nelson K.A."/>
            <person name="Nixon K."/>
            <person name="Nusskern D.R."/>
            <person name="Pacleb J.M."/>
            <person name="Palazzolo M."/>
            <person name="Pittman G.S."/>
            <person name="Pan S."/>
            <person name="Pollard J."/>
            <person name="Puri V."/>
            <person name="Reese M.G."/>
            <person name="Reinert K."/>
            <person name="Remington K."/>
            <person name="Saunders R.D.C."/>
            <person name="Scheeler F."/>
            <person name="Shen H."/>
            <person name="Shue B.C."/>
            <person name="Siden-Kiamos I."/>
            <person name="Simpson M."/>
            <person name="Skupski M.P."/>
            <person name="Smith T.J."/>
            <person name="Spier E."/>
            <person name="Spradling A.C."/>
            <person name="Stapleton M."/>
            <person name="Strong R."/>
            <person name="Sun E."/>
            <person name="Svirskas R."/>
            <person name="Tector C."/>
            <person name="Turner R."/>
            <person name="Venter E."/>
            <person name="Wang A.H."/>
            <person name="Wang X."/>
            <person name="Wang Z.-Y."/>
            <person name="Wassarman D.A."/>
            <person name="Weinstock G.M."/>
            <person name="Weissenbach J."/>
            <person name="Williams S.M."/>
            <person name="Woodage T."/>
            <person name="Worley K.C."/>
            <person name="Wu D."/>
            <person name="Yang S."/>
            <person name="Yao Q.A."/>
            <person name="Ye J."/>
            <person name="Yeh R.-F."/>
            <person name="Zaveri J.S."/>
            <person name="Zhan M."/>
            <person name="Zhang G."/>
            <person name="Zhao Q."/>
            <person name="Zheng L."/>
            <person name="Zheng X.H."/>
            <person name="Zhong F.N."/>
            <person name="Zhong W."/>
            <person name="Zhou X."/>
            <person name="Zhu S.C."/>
            <person name="Zhu X."/>
            <person name="Smith H.O."/>
            <person name="Gibbs R.A."/>
            <person name="Myers E.W."/>
            <person name="Rubin G.M."/>
            <person name="Venter J.C."/>
        </authorList>
    </citation>
    <scope>NUCLEOTIDE SEQUENCE [LARGE SCALE GENOMIC DNA]</scope>
    <source>
        <strain>Berkeley</strain>
    </source>
</reference>
<reference key="2">
    <citation type="journal article" date="2002" name="Genome Biol.">
        <title>Annotation of the Drosophila melanogaster euchromatic genome: a systematic review.</title>
        <authorList>
            <person name="Misra S."/>
            <person name="Crosby M.A."/>
            <person name="Mungall C.J."/>
            <person name="Matthews B.B."/>
            <person name="Campbell K.S."/>
            <person name="Hradecky P."/>
            <person name="Huang Y."/>
            <person name="Kaminker J.S."/>
            <person name="Millburn G.H."/>
            <person name="Prochnik S.E."/>
            <person name="Smith C.D."/>
            <person name="Tupy J.L."/>
            <person name="Whitfield E.J."/>
            <person name="Bayraktaroglu L."/>
            <person name="Berman B.P."/>
            <person name="Bettencourt B.R."/>
            <person name="Celniker S.E."/>
            <person name="de Grey A.D.N.J."/>
            <person name="Drysdale R.A."/>
            <person name="Harris N.L."/>
            <person name="Richter J."/>
            <person name="Russo S."/>
            <person name="Schroeder A.J."/>
            <person name="Shu S.Q."/>
            <person name="Stapleton M."/>
            <person name="Yamada C."/>
            <person name="Ashburner M."/>
            <person name="Gelbart W.M."/>
            <person name="Rubin G.M."/>
            <person name="Lewis S.E."/>
        </authorList>
    </citation>
    <scope>GENOME REANNOTATION</scope>
    <scope>ALTERNATIVE SPLICING</scope>
    <source>
        <strain>Berkeley</strain>
    </source>
</reference>
<reference key="3">
    <citation type="journal article" date="2002" name="Genome Biol.">
        <title>A Drosophila full-length cDNA resource.</title>
        <authorList>
            <person name="Stapleton M."/>
            <person name="Carlson J.W."/>
            <person name="Brokstein P."/>
            <person name="Yu C."/>
            <person name="Champe M."/>
            <person name="George R.A."/>
            <person name="Guarin H."/>
            <person name="Kronmiller B."/>
            <person name="Pacleb J.M."/>
            <person name="Park S."/>
            <person name="Wan K.H."/>
            <person name="Rubin G.M."/>
            <person name="Celniker S.E."/>
        </authorList>
    </citation>
    <scope>NUCLEOTIDE SEQUENCE [LARGE SCALE MRNA]</scope>
    <source>
        <strain>Berkeley</strain>
        <tissue>Embryo</tissue>
    </source>
</reference>
<feature type="chain" id="PRO_0000213516" description="Conserved oligomeric Golgi complex subunit 6">
    <location>
        <begin position="1"/>
        <end position="630"/>
    </location>
</feature>
<feature type="splice variant" id="VSP_001133" description="In isoform Short." evidence="2">
    <original>DISDQLQNALGYIADGVCH</original>
    <variation>GKIRKCIHYGTKIVLFVLQ</variation>
    <location>
        <begin position="315"/>
        <end position="333"/>
    </location>
</feature>
<feature type="splice variant" id="VSP_001134" description="In isoform Short." evidence="2">
    <location>
        <begin position="334"/>
        <end position="630"/>
    </location>
</feature>
<comment type="function">
    <text evidence="1">Required for normal Golgi function.</text>
</comment>
<comment type="subunit">
    <text evidence="1">Component of the conserved oligomeric Golgi complex which is composed of eight different subunits and is required for normal Golgi morphology and localization.</text>
</comment>
<comment type="subcellular location">
    <subcellularLocation>
        <location evidence="1">Golgi apparatus membrane</location>
        <topology evidence="1">Peripheral membrane protein</topology>
    </subcellularLocation>
</comment>
<comment type="alternative products">
    <event type="alternative splicing"/>
    <isoform>
        <id>Q9V564-1</id>
        <name>Long</name>
        <sequence type="displayed"/>
    </isoform>
    <isoform>
        <id>Q9V564-2</id>
        <name>Short</name>
        <sequence type="described" ref="VSP_001133 VSP_001134"/>
    </isoform>
</comment>
<comment type="similarity">
    <text evidence="2">Belongs to the COG6 family.</text>
</comment>
<name>COG6_DROME</name>